<reference key="1">
    <citation type="journal article" date="2006" name="J. Bacteriol.">
        <title>Complete genome sequence of Yersinia pestis strains Antiqua and Nepal516: evidence of gene reduction in an emerging pathogen.</title>
        <authorList>
            <person name="Chain P.S.G."/>
            <person name="Hu P."/>
            <person name="Malfatti S.A."/>
            <person name="Radnedge L."/>
            <person name="Larimer F."/>
            <person name="Vergez L.M."/>
            <person name="Worsham P."/>
            <person name="Chu M.C."/>
            <person name="Andersen G.L."/>
        </authorList>
    </citation>
    <scope>NUCLEOTIDE SEQUENCE [LARGE SCALE GENOMIC DNA]</scope>
    <source>
        <strain>Antiqua</strain>
    </source>
</reference>
<gene>
    <name evidence="1" type="primary">rpsN</name>
    <name type="ordered locus">YPA_3250</name>
</gene>
<organism>
    <name type="scientific">Yersinia pestis bv. Antiqua (strain Antiqua)</name>
    <dbReference type="NCBI Taxonomy" id="360102"/>
    <lineage>
        <taxon>Bacteria</taxon>
        <taxon>Pseudomonadati</taxon>
        <taxon>Pseudomonadota</taxon>
        <taxon>Gammaproteobacteria</taxon>
        <taxon>Enterobacterales</taxon>
        <taxon>Yersiniaceae</taxon>
        <taxon>Yersinia</taxon>
    </lineage>
</organism>
<keyword id="KW-0687">Ribonucleoprotein</keyword>
<keyword id="KW-0689">Ribosomal protein</keyword>
<keyword id="KW-0694">RNA-binding</keyword>
<keyword id="KW-0699">rRNA-binding</keyword>
<protein>
    <recommendedName>
        <fullName evidence="1">Small ribosomal subunit protein uS14</fullName>
    </recommendedName>
    <alternativeName>
        <fullName evidence="3">30S ribosomal protein S14</fullName>
    </alternativeName>
</protein>
<name>RS14_YERPA</name>
<comment type="function">
    <text evidence="1">Binds 16S rRNA, required for the assembly of 30S particles and may also be responsible for determining the conformation of the 16S rRNA at the A site.</text>
</comment>
<comment type="subunit">
    <text evidence="1">Part of the 30S ribosomal subunit. Contacts proteins S3 and S10.</text>
</comment>
<comment type="similarity">
    <text evidence="1">Belongs to the universal ribosomal protein uS14 family.</text>
</comment>
<accession>Q1C2W0</accession>
<evidence type="ECO:0000255" key="1">
    <source>
        <dbReference type="HAMAP-Rule" id="MF_00537"/>
    </source>
</evidence>
<evidence type="ECO:0000256" key="2">
    <source>
        <dbReference type="SAM" id="MobiDB-lite"/>
    </source>
</evidence>
<evidence type="ECO:0000305" key="3"/>
<proteinExistence type="inferred from homology"/>
<dbReference type="EMBL" id="CP000308">
    <property type="protein sequence ID" value="ABG15212.1"/>
    <property type="molecule type" value="Genomic_DNA"/>
</dbReference>
<dbReference type="RefSeq" id="WP_002213330.1">
    <property type="nucleotide sequence ID" value="NZ_CP009906.1"/>
</dbReference>
<dbReference type="SMR" id="Q1C2W0"/>
<dbReference type="GeneID" id="96663183"/>
<dbReference type="KEGG" id="ypa:YPA_3250"/>
<dbReference type="Proteomes" id="UP000001971">
    <property type="component" value="Chromosome"/>
</dbReference>
<dbReference type="GO" id="GO:0005737">
    <property type="term" value="C:cytoplasm"/>
    <property type="evidence" value="ECO:0007669"/>
    <property type="project" value="UniProtKB-ARBA"/>
</dbReference>
<dbReference type="GO" id="GO:0015935">
    <property type="term" value="C:small ribosomal subunit"/>
    <property type="evidence" value="ECO:0007669"/>
    <property type="project" value="TreeGrafter"/>
</dbReference>
<dbReference type="GO" id="GO:0019843">
    <property type="term" value="F:rRNA binding"/>
    <property type="evidence" value="ECO:0007669"/>
    <property type="project" value="UniProtKB-UniRule"/>
</dbReference>
<dbReference type="GO" id="GO:0003735">
    <property type="term" value="F:structural constituent of ribosome"/>
    <property type="evidence" value="ECO:0007669"/>
    <property type="project" value="InterPro"/>
</dbReference>
<dbReference type="GO" id="GO:0006412">
    <property type="term" value="P:translation"/>
    <property type="evidence" value="ECO:0007669"/>
    <property type="project" value="UniProtKB-UniRule"/>
</dbReference>
<dbReference type="FunFam" id="1.10.287.1480:FF:000001">
    <property type="entry name" value="30S ribosomal protein S14"/>
    <property type="match status" value="1"/>
</dbReference>
<dbReference type="Gene3D" id="1.10.287.1480">
    <property type="match status" value="1"/>
</dbReference>
<dbReference type="HAMAP" id="MF_00537">
    <property type="entry name" value="Ribosomal_uS14_1"/>
    <property type="match status" value="1"/>
</dbReference>
<dbReference type="InterPro" id="IPR001209">
    <property type="entry name" value="Ribosomal_uS14"/>
</dbReference>
<dbReference type="InterPro" id="IPR023036">
    <property type="entry name" value="Ribosomal_uS14_bac/plastid"/>
</dbReference>
<dbReference type="InterPro" id="IPR018271">
    <property type="entry name" value="Ribosomal_uS14_CS"/>
</dbReference>
<dbReference type="NCBIfam" id="NF006477">
    <property type="entry name" value="PRK08881.1"/>
    <property type="match status" value="1"/>
</dbReference>
<dbReference type="PANTHER" id="PTHR19836">
    <property type="entry name" value="30S RIBOSOMAL PROTEIN S14"/>
    <property type="match status" value="1"/>
</dbReference>
<dbReference type="PANTHER" id="PTHR19836:SF19">
    <property type="entry name" value="SMALL RIBOSOMAL SUBUNIT PROTEIN US14M"/>
    <property type="match status" value="1"/>
</dbReference>
<dbReference type="Pfam" id="PF00253">
    <property type="entry name" value="Ribosomal_S14"/>
    <property type="match status" value="1"/>
</dbReference>
<dbReference type="SUPFAM" id="SSF57716">
    <property type="entry name" value="Glucocorticoid receptor-like (DNA-binding domain)"/>
    <property type="match status" value="1"/>
</dbReference>
<dbReference type="PROSITE" id="PS00527">
    <property type="entry name" value="RIBOSOMAL_S14"/>
    <property type="match status" value="1"/>
</dbReference>
<sequence>MAKQSMKAREVVRVKLANKYRAKREELKAIISGVNSSDEDRWDAVLKLQSLPRDSSPSRQRNRCNQTGRPHGFLRKFGLSRIKVRETAMRGEIPGLKKASW</sequence>
<feature type="chain" id="PRO_1000128651" description="Small ribosomal subunit protein uS14">
    <location>
        <begin position="1"/>
        <end position="101"/>
    </location>
</feature>
<feature type="region of interest" description="Disordered" evidence="2">
    <location>
        <begin position="49"/>
        <end position="70"/>
    </location>
</feature>
<feature type="compositionally biased region" description="Polar residues" evidence="2">
    <location>
        <begin position="52"/>
        <end position="68"/>
    </location>
</feature>